<accession>P0DKU2</accession>
<organism>
    <name type="scientific">Pandinus imperator</name>
    <name type="common">Emperor scorpion</name>
    <dbReference type="NCBI Taxonomy" id="55084"/>
    <lineage>
        <taxon>Eukaryota</taxon>
        <taxon>Metazoa</taxon>
        <taxon>Ecdysozoa</taxon>
        <taxon>Arthropoda</taxon>
        <taxon>Chelicerata</taxon>
        <taxon>Arachnida</taxon>
        <taxon>Scorpiones</taxon>
        <taxon>Iurida</taxon>
        <taxon>Scorpionoidea</taxon>
        <taxon>Scorpionidae</taxon>
        <taxon>Pandininae</taxon>
        <taxon>Pandinus</taxon>
    </lineage>
</organism>
<proteinExistence type="evidence at protein level"/>
<feature type="signal peptide" evidence="5">
    <location>
        <begin position="1"/>
        <end position="15"/>
    </location>
</feature>
<feature type="chain" id="PRO_0000420883" description="Phospholipase A2 large subunit">
    <location>
        <begin position="16"/>
        <end position="123"/>
    </location>
</feature>
<feature type="propeptide" id="PRO_0000420884" evidence="5">
    <location>
        <begin position="124"/>
        <end position="128"/>
    </location>
</feature>
<feature type="peptide" id="PRO_0000420885" description="Phospholipase A2 small subunit">
    <location>
        <begin position="129"/>
        <end position="145"/>
    </location>
</feature>
<feature type="active site" evidence="4">
    <location>
        <position position="49"/>
    </location>
</feature>
<feature type="binding site" evidence="2">
    <location>
        <position position="24"/>
    </location>
    <ligand>
        <name>Ca(2+)</name>
        <dbReference type="ChEBI" id="CHEBI:29108"/>
    </ligand>
</feature>
<feature type="binding site" evidence="2">
    <location>
        <position position="26"/>
    </location>
    <ligand>
        <name>Ca(2+)</name>
        <dbReference type="ChEBI" id="CHEBI:29108"/>
    </ligand>
</feature>
<feature type="binding site" evidence="2">
    <location>
        <position position="28"/>
    </location>
    <ligand>
        <name>Ca(2+)</name>
        <dbReference type="ChEBI" id="CHEBI:29108"/>
    </ligand>
</feature>
<feature type="binding site" evidence="2">
    <location>
        <position position="50"/>
    </location>
    <ligand>
        <name>Ca(2+)</name>
        <dbReference type="ChEBI" id="CHEBI:29108"/>
    </ligand>
</feature>
<feature type="disulfide bond" evidence="3">
    <location>
        <begin position="25"/>
        <end position="46"/>
    </location>
</feature>
<feature type="disulfide bond" evidence="3">
    <location>
        <begin position="45"/>
        <end position="84"/>
    </location>
</feature>
<feature type="disulfide bond" evidence="3">
    <location>
        <begin position="52"/>
        <end position="77"/>
    </location>
</feature>
<feature type="disulfide bond" evidence="3">
    <location>
        <begin position="75"/>
        <end position="116"/>
    </location>
</feature>
<feature type="disulfide bond" description="Interchain (between large and small chains)" evidence="3">
    <location>
        <begin position="121"/>
        <end position="132"/>
    </location>
</feature>
<reference key="1">
    <citation type="journal article" date="1999" name="FEBS Lett.">
        <title>Phospholipin, a novel heterodimeric phospholipase A2 from Pandinus imperator scp6pion venom.</title>
        <authorList>
            <person name="Conde R."/>
            <person name="Zamudio F.Z."/>
            <person name="Becerril B."/>
            <person name="Possani L.D."/>
        </authorList>
    </citation>
    <scope>NUCLEOTIDE SEQUENCE [MRNA]</scope>
    <scope>PROTEIN SEQUENCE OF 16-86; 88-123 AND 129-145</scope>
    <scope>CATALYTIC ACTIVITY</scope>
    <scope>SUBUNIT</scope>
    <scope>MASS SPECTROMETRY</scope>
    <source>
        <tissue>Venom</tissue>
        <tissue>Venom gland</tissue>
    </source>
</reference>
<protein>
    <recommendedName>
        <fullName>Phospholipase A2 phospholipin</fullName>
        <ecNumber>3.1.1.4</ecNumber>
    </recommendedName>
    <alternativeName>
        <fullName>Phosphatidylcholine 2-acylhydrolase</fullName>
    </alternativeName>
    <component>
        <recommendedName>
            <fullName>Phospholipase A2 large subunit</fullName>
        </recommendedName>
    </component>
    <component>
        <recommendedName>
            <fullName>Phospholipase A2 small subunit</fullName>
        </recommendedName>
    </component>
</protein>
<keyword id="KW-0106">Calcium</keyword>
<keyword id="KW-0165">Cleavage on pair of basic residues</keyword>
<keyword id="KW-0903">Direct protein sequencing</keyword>
<keyword id="KW-1015">Disulfide bond</keyword>
<keyword id="KW-0378">Hydrolase</keyword>
<keyword id="KW-0442">Lipid degradation</keyword>
<keyword id="KW-0443">Lipid metabolism</keyword>
<keyword id="KW-0479">Metal-binding</keyword>
<keyword id="KW-0964">Secreted</keyword>
<keyword id="KW-0732">Signal</keyword>
<keyword id="KW-0800">Toxin</keyword>
<keyword id="KW-0865">Zymogen</keyword>
<evidence type="ECO:0000250" key="1"/>
<evidence type="ECO:0000250" key="2">
    <source>
        <dbReference type="UniProtKB" id="P00630"/>
    </source>
</evidence>
<evidence type="ECO:0000250" key="3">
    <source>
        <dbReference type="UniProtKB" id="Q6T178"/>
    </source>
</evidence>
<evidence type="ECO:0000255" key="4">
    <source>
        <dbReference type="PROSITE-ProRule" id="PRU10035"/>
    </source>
</evidence>
<evidence type="ECO:0000269" key="5">
    <source>
    </source>
</evidence>
<evidence type="ECO:0000305" key="6"/>
<comment type="function">
    <text>Scorpion venom phospholipase A2 (PLA2) that contains enzymatic activity, but does not inhibit ryanodine receptors in contrary to imperatoxin-1, another heterodimer of P.imperator venom. PLA2 catalyzes the calcium-dependent hydrolysis of the 2-acyl groups in 3-sn-phosphoglycerides.</text>
</comment>
<comment type="catalytic activity">
    <reaction evidence="4 5">
        <text>a 1,2-diacyl-sn-glycero-3-phosphocholine + H2O = a 1-acyl-sn-glycero-3-phosphocholine + a fatty acid + H(+)</text>
        <dbReference type="Rhea" id="RHEA:15801"/>
        <dbReference type="ChEBI" id="CHEBI:15377"/>
        <dbReference type="ChEBI" id="CHEBI:15378"/>
        <dbReference type="ChEBI" id="CHEBI:28868"/>
        <dbReference type="ChEBI" id="CHEBI:57643"/>
        <dbReference type="ChEBI" id="CHEBI:58168"/>
        <dbReference type="EC" id="3.1.1.4"/>
    </reaction>
</comment>
<comment type="cofactor">
    <cofactor evidence="1">
        <name>Ca(2+)</name>
        <dbReference type="ChEBI" id="CHEBI:29108"/>
    </cofactor>
    <text evidence="1">Binds 1 Ca(2+) ion.</text>
</comment>
<comment type="subunit">
    <text evidence="5">Heterodimer composed of a small subunit and a large subunit; disulfid-linked.</text>
</comment>
<comment type="subcellular location">
    <subcellularLocation>
        <location>Secreted</location>
    </subcellularLocation>
</comment>
<comment type="tissue specificity">
    <text>Expressed by the venom gland.</text>
</comment>
<comment type="mass spectrometry">
    <text>The measured ranges are 16-123, 129-145.</text>
</comment>
<comment type="similarity">
    <text evidence="6">Belongs to the phospholipase A2 family. Group III subfamily.</text>
</comment>
<comment type="caution">
    <text evidence="6">The sequence signal is uncertain for 2 reasons. Firstly, it contains 2 consecutive basic residues (Arg) that may indicate that this segment corresponds to the message for translating an unknown third peptide or long propeptide. Secondly, it is not predicted by the predictive tools.</text>
</comment>
<name>PA2_PANIM</name>
<sequence>MVDLARRCSGSTEGRFLMWECTKWCGPGNNAKCESDLGPLEADKCCRTHDHCDYIASGETKYGITNYAFFTKLNCKCEEAFDRCLTEAYNKEEKESAKSSTKRLQNFYFGTYSPECYVVTCNSKRSGRDAGCENGVATWKKSYKD</sequence>
<dbReference type="EC" id="3.1.1.4"/>
<dbReference type="SMR" id="P0DKU2"/>
<dbReference type="GO" id="GO:0005576">
    <property type="term" value="C:extracellular region"/>
    <property type="evidence" value="ECO:0007669"/>
    <property type="project" value="UniProtKB-SubCell"/>
</dbReference>
<dbReference type="GO" id="GO:0046872">
    <property type="term" value="F:metal ion binding"/>
    <property type="evidence" value="ECO:0007669"/>
    <property type="project" value="UniProtKB-KW"/>
</dbReference>
<dbReference type="GO" id="GO:0004623">
    <property type="term" value="F:phospholipase A2 activity"/>
    <property type="evidence" value="ECO:0007669"/>
    <property type="project" value="UniProtKB-EC"/>
</dbReference>
<dbReference type="GO" id="GO:0090729">
    <property type="term" value="F:toxin activity"/>
    <property type="evidence" value="ECO:0007669"/>
    <property type="project" value="UniProtKB-KW"/>
</dbReference>
<dbReference type="GO" id="GO:0050482">
    <property type="term" value="P:arachidonate secretion"/>
    <property type="evidence" value="ECO:0007669"/>
    <property type="project" value="InterPro"/>
</dbReference>
<dbReference type="GO" id="GO:0016042">
    <property type="term" value="P:lipid catabolic process"/>
    <property type="evidence" value="ECO:0007669"/>
    <property type="project" value="UniProtKB-KW"/>
</dbReference>
<dbReference type="GO" id="GO:0006644">
    <property type="term" value="P:phospholipid metabolic process"/>
    <property type="evidence" value="ECO:0007669"/>
    <property type="project" value="InterPro"/>
</dbReference>
<dbReference type="Gene3D" id="1.20.90.10">
    <property type="entry name" value="Phospholipase A2 domain"/>
    <property type="match status" value="1"/>
</dbReference>
<dbReference type="InterPro" id="IPR016090">
    <property type="entry name" value="PLipase_A2_dom"/>
</dbReference>
<dbReference type="InterPro" id="IPR036444">
    <property type="entry name" value="PLipase_A2_dom_sf"/>
</dbReference>
<dbReference type="InterPro" id="IPR033113">
    <property type="entry name" value="PLipase_A2_His_AS"/>
</dbReference>
<dbReference type="PANTHER" id="PTHR12253">
    <property type="entry name" value="RH14732P"/>
    <property type="match status" value="1"/>
</dbReference>
<dbReference type="Pfam" id="PF05826">
    <property type="entry name" value="Phospholip_A2_2"/>
    <property type="match status" value="1"/>
</dbReference>
<dbReference type="SUPFAM" id="SSF48619">
    <property type="entry name" value="Phospholipase A2, PLA2"/>
    <property type="match status" value="1"/>
</dbReference>
<dbReference type="PROSITE" id="PS00118">
    <property type="entry name" value="PA2_HIS"/>
    <property type="match status" value="1"/>
</dbReference>